<gene>
    <name evidence="6" type="ORF">GME11359</name>
</gene>
<proteinExistence type="evidence at transcript level"/>
<organism>
    <name type="scientific">Pestalotiopsis microspora</name>
    <dbReference type="NCBI Taxonomy" id="85828"/>
    <lineage>
        <taxon>Eukaryota</taxon>
        <taxon>Fungi</taxon>
        <taxon>Dikarya</taxon>
        <taxon>Ascomycota</taxon>
        <taxon>Pezizomycotina</taxon>
        <taxon>Sordariomycetes</taxon>
        <taxon>Xylariomycetidae</taxon>
        <taxon>Amphisphaeriales</taxon>
        <taxon>Sporocadaceae</taxon>
        <taxon>Pestalotiopsis</taxon>
    </lineage>
</organism>
<protein>
    <recommendedName>
        <fullName evidence="6">Short-chain dehydrogenase/reductase GME11359</fullName>
        <ecNumber evidence="8">1.1.1.-</ecNumber>
    </recommendedName>
    <alternativeName>
        <fullName evidence="6">Dibenzodioxocinones biosynthesis cluster protein GME11359</fullName>
    </alternativeName>
</protein>
<sequence length="291" mass="31972">MAATLGKTIVATGASSGLGFESVKQLLQQSQPYKFIIGARDLKTTQAAFDQVQYDAKTHSVSILPLDLADLRTVKPFAQQTLEALDQDKLDILFLNAGMNKAATGPGLHGSKWCEAYVVNHLSQHYLTQLLRPKLSASHSRVVVVSSGLIRAVKEADIEAFETTLKADSGADGFKVYHASKFVQFLGAHWWRRQLGTSATVLAVSPGLVIGTGLGRHLDTQPNLDHIPDKVTVDKGAKSLLRAFDCNDIPEDPEQIFLTSWGEWWPKDVYSLSLDKSLQDRWCPSQEDIEA</sequence>
<comment type="function">
    <text evidence="4 8">Short-chain dehydrogenase/reductase; part of the gene cluster that mediates the biosynthesis of dibenzodioxocinones such as pestalotiollide B, a novel class of inhibitors against cholesterol ester transfer protein (CEPT) (PubMed:31474098). The biosynthesis initiates from condensation of acetate and malonate units catalyzed by the non-reducing PKS pks8/GME11356. Pks8/GME11356 lacks a thioesterase (TE) domain, which is important to the cyclizing of the third ring of atrochrysone carboxylic acid, and the esterase GME11355 might play the role of TE and catalyzes the cyclization reaction of the C ring. The lactamase-like protein GME11357 (or other beta-lactamases in Pestalotiopsis microspora) probably hydrolyzes the thioester bond between the ACP of pks8/GME11356 and the intermediate to release atrochrysone carboxylic acid, which is spontaneously dehydrates to form endocrocin anthrone. Endocrocin anthrone is further converted to emodin via the endocrocin intermediate. Emodin is then oxidized by several enzymes such as the Baeyer-Villiger oxidase GME11358, the oxidoreductase GME11367, the short chain dehydrogenase/reductase GME11373, as well as by other oxidoreductases from the cluster, to modify the A and C rings and open the B ring, and finally yield monodictyphenone. The prenyltransferase GME11375 may catalyze the addition reaction between the C5 side chains and the carbon bone of dibenzodioxocinones. The remaining biochemical reactions to the final product dibenzodioxocinones should be methylation catalyzed by methyltransferase GME11366 and reduction and lactonization reaction catalyzed by a series of oxidordeuctases (Probable).</text>
</comment>
<comment type="pathway">
    <text evidence="8">Secondary metabolite biosynthesis.</text>
</comment>
<comment type="induction">
    <text evidence="5">The expression of the dibenzodioxocinones biosynthesis cluster is positively regulated by the transcription factor dibT.</text>
</comment>
<comment type="similarity">
    <text evidence="7">Belongs to the short-chain dehydrogenases/reductases (SDR) family.</text>
</comment>
<dbReference type="EC" id="1.1.1.-" evidence="8"/>
<dbReference type="EMBL" id="MK590978">
    <property type="protein sequence ID" value="QED41490.1"/>
    <property type="molecule type" value="mRNA"/>
</dbReference>
<dbReference type="SMR" id="A0A5B8YU33"/>
<dbReference type="GO" id="GO:0016491">
    <property type="term" value="F:oxidoreductase activity"/>
    <property type="evidence" value="ECO:0007669"/>
    <property type="project" value="UniProtKB-KW"/>
</dbReference>
<dbReference type="Gene3D" id="3.40.50.720">
    <property type="entry name" value="NAD(P)-binding Rossmann-like Domain"/>
    <property type="match status" value="1"/>
</dbReference>
<dbReference type="InterPro" id="IPR036291">
    <property type="entry name" value="NAD(P)-bd_dom_sf"/>
</dbReference>
<dbReference type="InterPro" id="IPR002347">
    <property type="entry name" value="SDR_fam"/>
</dbReference>
<dbReference type="PANTHER" id="PTHR43157:SF31">
    <property type="entry name" value="PHOSPHATIDYLINOSITOL-GLYCAN BIOSYNTHESIS CLASS F PROTEIN"/>
    <property type="match status" value="1"/>
</dbReference>
<dbReference type="PANTHER" id="PTHR43157">
    <property type="entry name" value="PHOSPHATIDYLINOSITOL-GLYCAN BIOSYNTHESIS CLASS F PROTEIN-RELATED"/>
    <property type="match status" value="1"/>
</dbReference>
<dbReference type="Pfam" id="PF00106">
    <property type="entry name" value="adh_short"/>
    <property type="match status" value="1"/>
</dbReference>
<dbReference type="PRINTS" id="PR00081">
    <property type="entry name" value="GDHRDH"/>
</dbReference>
<dbReference type="SUPFAM" id="SSF51735">
    <property type="entry name" value="NAD(P)-binding Rossmann-fold domains"/>
    <property type="match status" value="1"/>
</dbReference>
<evidence type="ECO:0000250" key="1">
    <source>
        <dbReference type="UniProtKB" id="L0E2Z4"/>
    </source>
</evidence>
<evidence type="ECO:0000250" key="2">
    <source>
        <dbReference type="UniProtKB" id="O93868"/>
    </source>
</evidence>
<evidence type="ECO:0000255" key="3">
    <source>
        <dbReference type="PROSITE-ProRule" id="PRU10001"/>
    </source>
</evidence>
<evidence type="ECO:0000269" key="4">
    <source>
    </source>
</evidence>
<evidence type="ECO:0000269" key="5">
    <source>
    </source>
</evidence>
<evidence type="ECO:0000303" key="6">
    <source>
    </source>
</evidence>
<evidence type="ECO:0000305" key="7"/>
<evidence type="ECO:0000305" key="8">
    <source>
    </source>
</evidence>
<accession>A0A5B8YU33</accession>
<feature type="chain" id="PRO_0000456731" description="Short-chain dehydrogenase/reductase GME11359">
    <location>
        <begin position="1"/>
        <end position="291"/>
    </location>
</feature>
<feature type="active site" description="Proton acceptor" evidence="3">
    <location>
        <position position="177"/>
    </location>
</feature>
<feature type="active site" description="Lowers pKa of active site Tyr" evidence="2">
    <location>
        <position position="181"/>
    </location>
</feature>
<feature type="binding site" evidence="1">
    <location>
        <position position="18"/>
    </location>
    <ligand>
        <name>NADP(+)</name>
        <dbReference type="ChEBI" id="CHEBI:58349"/>
    </ligand>
</feature>
<feature type="binding site" evidence="1">
    <location>
        <position position="67"/>
    </location>
    <ligand>
        <name>NADP(+)</name>
        <dbReference type="ChEBI" id="CHEBI:58349"/>
    </ligand>
</feature>
<feature type="binding site" evidence="2">
    <location>
        <position position="96"/>
    </location>
    <ligand>
        <name>NADP(+)</name>
        <dbReference type="ChEBI" id="CHEBI:58349"/>
    </ligand>
</feature>
<feature type="binding site" evidence="2">
    <location>
        <position position="177"/>
    </location>
    <ligand>
        <name>NADP(+)</name>
        <dbReference type="ChEBI" id="CHEBI:58349"/>
    </ligand>
</feature>
<feature type="binding site" evidence="2">
    <location>
        <position position="181"/>
    </location>
    <ligand>
        <name>NADP(+)</name>
        <dbReference type="ChEBI" id="CHEBI:58349"/>
    </ligand>
</feature>
<feature type="binding site" evidence="2">
    <location>
        <position position="209"/>
    </location>
    <ligand>
        <name>NADP(+)</name>
        <dbReference type="ChEBI" id="CHEBI:58349"/>
    </ligand>
</feature>
<name>GME59_PESMI</name>
<reference key="1">
    <citation type="journal article" date="2019" name="J. Microbiol. Biotechnol.">
        <title>A gene cluster for the biosynthesis of dibenzodioxocinons in the endophyte Pestalotiopsis microspora, a taxol producer.</title>
        <authorList>
            <person name="Liu Y."/>
            <person name="Chen L."/>
            <person name="Xie Q."/>
            <person name="Yu X."/>
            <person name="Duan A."/>
            <person name="Lin Y."/>
            <person name="Xiang B."/>
            <person name="Hao X."/>
            <person name="Chen W."/>
            <person name="Zhu X."/>
        </authorList>
    </citation>
    <scope>NUCLEOTIDE SEQUENCE [MRNA]</scope>
    <scope>FUNCTION</scope>
    <scope>PATHWAY</scope>
    <source>
        <strain>NK17</strain>
    </source>
</reference>
<reference key="2">
    <citation type="journal article" date="2022" name="Microbiol. Res.">
        <title>Acquiring novel chemicals by overexpression of a transcription factor DibT in the dibenzodioxocinone biosynthetic cluster in Pestalotiopsis microspora.</title>
        <authorList>
            <person name="Liu Y."/>
            <person name="Fu Y."/>
            <person name="Zhou M."/>
            <person name="Hao X."/>
            <person name="Zhang P."/>
            <person name="Zhu X."/>
        </authorList>
    </citation>
    <scope>INDUCTION</scope>
</reference>
<keyword id="KW-0521">NADP</keyword>
<keyword id="KW-0560">Oxidoreductase</keyword>